<reference key="1">
    <citation type="journal article" date="2000" name="Mol. Cell. Biol.">
        <title>TAK1 participates in c-Jun N-terminal kinase signaling during Drosophila development.</title>
        <authorList>
            <person name="Takatsu Y."/>
            <person name="Nakamura M."/>
            <person name="Stapleton M."/>
            <person name="Danos M.C."/>
            <person name="Matsumoto K."/>
            <person name="O'Connor M.B."/>
            <person name="Shibuya H."/>
            <person name="Ueno N."/>
        </authorList>
    </citation>
    <scope>NUCLEOTIDE SEQUENCE [MRNA]</scope>
    <scope>FUNCTION</scope>
    <source>
        <tissue>Ovary</tissue>
    </source>
</reference>
<reference key="2">
    <citation type="journal article" date="2000" name="Science">
        <title>The genome sequence of Drosophila melanogaster.</title>
        <authorList>
            <person name="Adams M.D."/>
            <person name="Celniker S.E."/>
            <person name="Holt R.A."/>
            <person name="Evans C.A."/>
            <person name="Gocayne J.D."/>
            <person name="Amanatides P.G."/>
            <person name="Scherer S.E."/>
            <person name="Li P.W."/>
            <person name="Hoskins R.A."/>
            <person name="Galle R.F."/>
            <person name="George R.A."/>
            <person name="Lewis S.E."/>
            <person name="Richards S."/>
            <person name="Ashburner M."/>
            <person name="Henderson S.N."/>
            <person name="Sutton G.G."/>
            <person name="Wortman J.R."/>
            <person name="Yandell M.D."/>
            <person name="Zhang Q."/>
            <person name="Chen L.X."/>
            <person name="Brandon R.C."/>
            <person name="Rogers Y.-H.C."/>
            <person name="Blazej R.G."/>
            <person name="Champe M."/>
            <person name="Pfeiffer B.D."/>
            <person name="Wan K.H."/>
            <person name="Doyle C."/>
            <person name="Baxter E.G."/>
            <person name="Helt G."/>
            <person name="Nelson C.R."/>
            <person name="Miklos G.L.G."/>
            <person name="Abril J.F."/>
            <person name="Agbayani A."/>
            <person name="An H.-J."/>
            <person name="Andrews-Pfannkoch C."/>
            <person name="Baldwin D."/>
            <person name="Ballew R.M."/>
            <person name="Basu A."/>
            <person name="Baxendale J."/>
            <person name="Bayraktaroglu L."/>
            <person name="Beasley E.M."/>
            <person name="Beeson K.Y."/>
            <person name="Benos P.V."/>
            <person name="Berman B.P."/>
            <person name="Bhandari D."/>
            <person name="Bolshakov S."/>
            <person name="Borkova D."/>
            <person name="Botchan M.R."/>
            <person name="Bouck J."/>
            <person name="Brokstein P."/>
            <person name="Brottier P."/>
            <person name="Burtis K.C."/>
            <person name="Busam D.A."/>
            <person name="Butler H."/>
            <person name="Cadieu E."/>
            <person name="Center A."/>
            <person name="Chandra I."/>
            <person name="Cherry J.M."/>
            <person name="Cawley S."/>
            <person name="Dahlke C."/>
            <person name="Davenport L.B."/>
            <person name="Davies P."/>
            <person name="de Pablos B."/>
            <person name="Delcher A."/>
            <person name="Deng Z."/>
            <person name="Mays A.D."/>
            <person name="Dew I."/>
            <person name="Dietz S.M."/>
            <person name="Dodson K."/>
            <person name="Doup L.E."/>
            <person name="Downes M."/>
            <person name="Dugan-Rocha S."/>
            <person name="Dunkov B.C."/>
            <person name="Dunn P."/>
            <person name="Durbin K.J."/>
            <person name="Evangelista C.C."/>
            <person name="Ferraz C."/>
            <person name="Ferriera S."/>
            <person name="Fleischmann W."/>
            <person name="Fosler C."/>
            <person name="Gabrielian A.E."/>
            <person name="Garg N.S."/>
            <person name="Gelbart W.M."/>
            <person name="Glasser K."/>
            <person name="Glodek A."/>
            <person name="Gong F."/>
            <person name="Gorrell J.H."/>
            <person name="Gu Z."/>
            <person name="Guan P."/>
            <person name="Harris M."/>
            <person name="Harris N.L."/>
            <person name="Harvey D.A."/>
            <person name="Heiman T.J."/>
            <person name="Hernandez J.R."/>
            <person name="Houck J."/>
            <person name="Hostin D."/>
            <person name="Houston K.A."/>
            <person name="Howland T.J."/>
            <person name="Wei M.-H."/>
            <person name="Ibegwam C."/>
            <person name="Jalali M."/>
            <person name="Kalush F."/>
            <person name="Karpen G.H."/>
            <person name="Ke Z."/>
            <person name="Kennison J.A."/>
            <person name="Ketchum K.A."/>
            <person name="Kimmel B.E."/>
            <person name="Kodira C.D."/>
            <person name="Kraft C.L."/>
            <person name="Kravitz S."/>
            <person name="Kulp D."/>
            <person name="Lai Z."/>
            <person name="Lasko P."/>
            <person name="Lei Y."/>
            <person name="Levitsky A.A."/>
            <person name="Li J.H."/>
            <person name="Li Z."/>
            <person name="Liang Y."/>
            <person name="Lin X."/>
            <person name="Liu X."/>
            <person name="Mattei B."/>
            <person name="McIntosh T.C."/>
            <person name="McLeod M.P."/>
            <person name="McPherson D."/>
            <person name="Merkulov G."/>
            <person name="Milshina N.V."/>
            <person name="Mobarry C."/>
            <person name="Morris J."/>
            <person name="Moshrefi A."/>
            <person name="Mount S.M."/>
            <person name="Moy M."/>
            <person name="Murphy B."/>
            <person name="Murphy L."/>
            <person name="Muzny D.M."/>
            <person name="Nelson D.L."/>
            <person name="Nelson D.R."/>
            <person name="Nelson K.A."/>
            <person name="Nixon K."/>
            <person name="Nusskern D.R."/>
            <person name="Pacleb J.M."/>
            <person name="Palazzolo M."/>
            <person name="Pittman G.S."/>
            <person name="Pan S."/>
            <person name="Pollard J."/>
            <person name="Puri V."/>
            <person name="Reese M.G."/>
            <person name="Reinert K."/>
            <person name="Remington K."/>
            <person name="Saunders R.D.C."/>
            <person name="Scheeler F."/>
            <person name="Shen H."/>
            <person name="Shue B.C."/>
            <person name="Siden-Kiamos I."/>
            <person name="Simpson M."/>
            <person name="Skupski M.P."/>
            <person name="Smith T.J."/>
            <person name="Spier E."/>
            <person name="Spradling A.C."/>
            <person name="Stapleton M."/>
            <person name="Strong R."/>
            <person name="Sun E."/>
            <person name="Svirskas R."/>
            <person name="Tector C."/>
            <person name="Turner R."/>
            <person name="Venter E."/>
            <person name="Wang A.H."/>
            <person name="Wang X."/>
            <person name="Wang Z.-Y."/>
            <person name="Wassarman D.A."/>
            <person name="Weinstock G.M."/>
            <person name="Weissenbach J."/>
            <person name="Williams S.M."/>
            <person name="Woodage T."/>
            <person name="Worley K.C."/>
            <person name="Wu D."/>
            <person name="Yang S."/>
            <person name="Yao Q.A."/>
            <person name="Ye J."/>
            <person name="Yeh R.-F."/>
            <person name="Zaveri J.S."/>
            <person name="Zhan M."/>
            <person name="Zhang G."/>
            <person name="Zhao Q."/>
            <person name="Zheng L."/>
            <person name="Zheng X.H."/>
            <person name="Zhong F.N."/>
            <person name="Zhong W."/>
            <person name="Zhou X."/>
            <person name="Zhu S.C."/>
            <person name="Zhu X."/>
            <person name="Smith H.O."/>
            <person name="Gibbs R.A."/>
            <person name="Myers E.W."/>
            <person name="Rubin G.M."/>
            <person name="Venter J.C."/>
        </authorList>
    </citation>
    <scope>NUCLEOTIDE SEQUENCE [LARGE SCALE GENOMIC DNA]</scope>
    <source>
        <strain>Berkeley</strain>
    </source>
</reference>
<reference key="3">
    <citation type="journal article" date="2002" name="Genome Biol.">
        <title>Annotation of the Drosophila melanogaster euchromatic genome: a systematic review.</title>
        <authorList>
            <person name="Misra S."/>
            <person name="Crosby M.A."/>
            <person name="Mungall C.J."/>
            <person name="Matthews B.B."/>
            <person name="Campbell K.S."/>
            <person name="Hradecky P."/>
            <person name="Huang Y."/>
            <person name="Kaminker J.S."/>
            <person name="Millburn G.H."/>
            <person name="Prochnik S.E."/>
            <person name="Smith C.D."/>
            <person name="Tupy J.L."/>
            <person name="Whitfield E.J."/>
            <person name="Bayraktaroglu L."/>
            <person name="Berman B.P."/>
            <person name="Bettencourt B.R."/>
            <person name="Celniker S.E."/>
            <person name="de Grey A.D.N.J."/>
            <person name="Drysdale R.A."/>
            <person name="Harris N.L."/>
            <person name="Richter J."/>
            <person name="Russo S."/>
            <person name="Schroeder A.J."/>
            <person name="Shu S.Q."/>
            <person name="Stapleton M."/>
            <person name="Yamada C."/>
            <person name="Ashburner M."/>
            <person name="Gelbart W.M."/>
            <person name="Rubin G.M."/>
            <person name="Lewis S.E."/>
        </authorList>
    </citation>
    <scope>GENOME REANNOTATION</scope>
    <source>
        <strain>Berkeley</strain>
    </source>
</reference>
<reference key="4">
    <citation type="journal article" date="2002" name="Genome Biol.">
        <title>A Drosophila full-length cDNA resource.</title>
        <authorList>
            <person name="Stapleton M."/>
            <person name="Carlson J.W."/>
            <person name="Brokstein P."/>
            <person name="Yu C."/>
            <person name="Champe M."/>
            <person name="George R.A."/>
            <person name="Guarin H."/>
            <person name="Kronmiller B."/>
            <person name="Pacleb J.M."/>
            <person name="Park S."/>
            <person name="Wan K.H."/>
            <person name="Rubin G.M."/>
            <person name="Celniker S.E."/>
        </authorList>
    </citation>
    <scope>NUCLEOTIDE SEQUENCE [LARGE SCALE MRNA]</scope>
    <source>
        <strain>Berkeley</strain>
        <tissue>Embryo</tissue>
    </source>
</reference>
<reference key="5">
    <citation type="journal article" date="2003" name="J. Biol. Chem.">
        <title>Immune activation of NF-kappaB and JNK requires Drosophila TAK1.</title>
        <authorList>
            <person name="Silverman N."/>
            <person name="Zhou R."/>
            <person name="Erlich R.L."/>
            <person name="Hunter M."/>
            <person name="Bernstein E."/>
            <person name="Schneider D."/>
            <person name="Maniatis T."/>
        </authorList>
    </citation>
    <scope>FUNCTION</scope>
</reference>
<reference key="6">
    <citation type="journal article" date="2004" name="Genes Dev.">
        <title>Targeting of TAK1 by the NF-kappa B protein Relish regulates the JNK-mediated immune response in Drosophila.</title>
        <authorList>
            <person name="Park J.M."/>
            <person name="Brady H."/>
            <person name="Ruocco M.G."/>
            <person name="Sun H."/>
            <person name="Williams D."/>
            <person name="Lee S.J."/>
            <person name="Kato T. Jr."/>
            <person name="Richards N."/>
            <person name="Chan K."/>
            <person name="Mercurio F."/>
            <person name="Karin M."/>
            <person name="Wasserman S.A."/>
        </authorList>
    </citation>
    <scope>FUNCTION</scope>
</reference>
<feature type="chain" id="PRO_0000086254" description="Mitogen-activated protein kinase kinase kinase 7">
    <location>
        <begin position="1"/>
        <end position="678"/>
    </location>
</feature>
<feature type="domain" description="Protein kinase" evidence="2">
    <location>
        <begin position="19"/>
        <end position="271"/>
    </location>
</feature>
<feature type="region of interest" description="Disordered" evidence="4">
    <location>
        <begin position="296"/>
        <end position="322"/>
    </location>
</feature>
<feature type="region of interest" description="Disordered" evidence="4">
    <location>
        <begin position="339"/>
        <end position="365"/>
    </location>
</feature>
<feature type="region of interest" description="Disordered" evidence="4">
    <location>
        <begin position="431"/>
        <end position="455"/>
    </location>
</feature>
<feature type="region of interest" description="Disordered" evidence="4">
    <location>
        <begin position="616"/>
        <end position="647"/>
    </location>
</feature>
<feature type="compositionally biased region" description="Low complexity" evidence="4">
    <location>
        <begin position="313"/>
        <end position="322"/>
    </location>
</feature>
<feature type="compositionally biased region" description="Low complexity" evidence="4">
    <location>
        <begin position="339"/>
        <end position="352"/>
    </location>
</feature>
<feature type="compositionally biased region" description="Polar residues" evidence="4">
    <location>
        <begin position="353"/>
        <end position="364"/>
    </location>
</feature>
<feature type="active site" description="Proton acceptor" evidence="2 3">
    <location>
        <position position="140"/>
    </location>
</feature>
<feature type="binding site" evidence="2">
    <location>
        <begin position="25"/>
        <end position="33"/>
    </location>
    <ligand>
        <name>ATP</name>
        <dbReference type="ChEBI" id="CHEBI:30616"/>
    </ligand>
</feature>
<feature type="binding site" evidence="2">
    <location>
        <position position="46"/>
    </location>
    <ligand>
        <name>ATP</name>
        <dbReference type="ChEBI" id="CHEBI:30616"/>
    </ligand>
</feature>
<protein>
    <recommendedName>
        <fullName>Mitogen-activated protein kinase kinase kinase 7</fullName>
        <ecNumber>2.7.11.25</ecNumber>
    </recommendedName>
    <alternativeName>
        <fullName>TGF-beta-activated kinase 1</fullName>
    </alternativeName>
    <alternativeName>
        <fullName>dTAK1</fullName>
    </alternativeName>
</protein>
<sequence length="678" mass="75675">MATASLDALQAAYVDFSEITLREKVGHGSYGVVCKAVWRDKLVAVKEFFASAEQKDIEKEVKQLSRVKHPNIIALHGISSYQQATYLIMEFAEGGSLHNFLHGKVKPAYSLAHAMSWARQCAEGLAYLHAMTPKPLIHRDVKPLNLLLTNKGRNLKICDFGTVADKSTMMTNNRGSAAWMAPEVFEGSKYTEKCDIFSWAIVLWEVLSRKQPFKGIDNAYTIQWKIYKGERPPLLTTCPKRIEDLMTACWKTVPEDRPSMQYIVGVMHEIVKDYTGADKALEYTFVNQQIVTKESDGTVAAQPDSLSSQEGELSPSSTQLTPTTAANANVNAIAISKTTTSSMTENTSSTSSDITPTNSGQLDNNPLFYMVTNRWDAIPEEESNESRNDSFNLTSSAEATQRLETIRNGMILMACKPMEQLTLDVEANGFDLSPSESSSSSTNAKSDGRERLTVTDTKPVMMTTDLSNNNGGIHAHSNGLLSHANGWQARDEELQEQEHEQEIVNSLDVDVDPDEDENDGTEQSLAEILDPELQPEPPIPNDAESQLIYRDHRHMAKEYLSVDTNLYYAQDFKDKLIVQMDRTEREQKQELLRKMKDKEGLQSLYNNLQQQYASRQLAAGHHPQPHPHPHPNQLQHPHSHPPMHFLQDEGCGLLPGSVCGGSESVEEGWVVIPPHHNA</sequence>
<dbReference type="EC" id="2.7.11.25"/>
<dbReference type="EMBL" id="AF199466">
    <property type="protein sequence ID" value="AAF06815.1"/>
    <property type="molecule type" value="mRNA"/>
</dbReference>
<dbReference type="EMBL" id="AE014298">
    <property type="protein sequence ID" value="AAF50895.1"/>
    <property type="molecule type" value="Genomic_DNA"/>
</dbReference>
<dbReference type="EMBL" id="AY051953">
    <property type="protein sequence ID" value="AAK93377.1"/>
    <property type="molecule type" value="mRNA"/>
</dbReference>
<dbReference type="RefSeq" id="NP_524080.1">
    <property type="nucleotide sequence ID" value="NM_079356.3"/>
</dbReference>
<dbReference type="SMR" id="Q9V3Q6"/>
<dbReference type="BioGRID" id="64981">
    <property type="interactions" value="156"/>
</dbReference>
<dbReference type="FunCoup" id="Q9V3Q6">
    <property type="interactions" value="2311"/>
</dbReference>
<dbReference type="IntAct" id="Q9V3Q6">
    <property type="interactions" value="1"/>
</dbReference>
<dbReference type="STRING" id="7227.FBpp0077011"/>
<dbReference type="PaxDb" id="7227-FBpp0077011"/>
<dbReference type="EnsemblMetazoa" id="FBtr0077319">
    <property type="protein sequence ID" value="FBpp0077011"/>
    <property type="gene ID" value="FBgn0026323"/>
</dbReference>
<dbReference type="GeneID" id="39659"/>
<dbReference type="KEGG" id="dme:Dmel_CG18492"/>
<dbReference type="AGR" id="FB:FBgn0026323"/>
<dbReference type="CTD" id="39659"/>
<dbReference type="FlyBase" id="FBgn0026323">
    <property type="gene designation" value="Tak1"/>
</dbReference>
<dbReference type="VEuPathDB" id="VectorBase:FBgn0026323"/>
<dbReference type="eggNOG" id="KOG0192">
    <property type="taxonomic scope" value="Eukaryota"/>
</dbReference>
<dbReference type="GeneTree" id="ENSGT00940000160233"/>
<dbReference type="HOGENOM" id="CLU_000288_7_41_1"/>
<dbReference type="InParanoid" id="Q9V3Q6"/>
<dbReference type="OMA" id="NNPLFHM"/>
<dbReference type="OrthoDB" id="10261027at2759"/>
<dbReference type="PhylomeDB" id="Q9V3Q6"/>
<dbReference type="Reactome" id="R-DME-209447">
    <property type="pathway name" value="Activation of the IkappaB kinase complex, KEY:IRD5 dimer:KEY"/>
</dbReference>
<dbReference type="Reactome" id="R-DME-4086398">
    <property type="pathway name" value="Ca2+ pathway"/>
</dbReference>
<dbReference type="Reactome" id="R-DME-445989">
    <property type="pathway name" value="TAK1-dependent IKK and NF-kappa-B activation"/>
</dbReference>
<dbReference type="Reactome" id="R-DME-450302">
    <property type="pathway name" value="activated TAK1 mediates p38 MAPK activation"/>
</dbReference>
<dbReference type="Reactome" id="R-DME-450321">
    <property type="pathway name" value="JNK (c-Jun kinases) phosphorylation and activation mediated by activated human TAK1"/>
</dbReference>
<dbReference type="SignaLink" id="Q9V3Q6"/>
<dbReference type="BioGRID-ORCS" id="39659">
    <property type="hits" value="0 hits in 3 CRISPR screens"/>
</dbReference>
<dbReference type="GenomeRNAi" id="39659"/>
<dbReference type="PRO" id="PR:Q9V3Q6"/>
<dbReference type="Proteomes" id="UP000000803">
    <property type="component" value="Chromosome X"/>
</dbReference>
<dbReference type="Bgee" id="FBgn0026323">
    <property type="expression patterns" value="Expressed in adult differentiating enterocyte in digestive tract and 145 other cell types or tissues"/>
</dbReference>
<dbReference type="ExpressionAtlas" id="Q9V3Q6">
    <property type="expression patterns" value="baseline and differential"/>
</dbReference>
<dbReference type="GO" id="GO:0005737">
    <property type="term" value="C:cytoplasm"/>
    <property type="evidence" value="ECO:0000314"/>
    <property type="project" value="FlyBase"/>
</dbReference>
<dbReference type="GO" id="GO:0005829">
    <property type="term" value="C:cytosol"/>
    <property type="evidence" value="ECO:0000304"/>
    <property type="project" value="Reactome"/>
</dbReference>
<dbReference type="GO" id="GO:0005524">
    <property type="term" value="F:ATP binding"/>
    <property type="evidence" value="ECO:0007669"/>
    <property type="project" value="UniProtKB-KW"/>
</dbReference>
<dbReference type="GO" id="GO:0004706">
    <property type="term" value="F:JUN kinase kinase kinase activity"/>
    <property type="evidence" value="ECO:0000315"/>
    <property type="project" value="UniProtKB"/>
</dbReference>
<dbReference type="GO" id="GO:0004709">
    <property type="term" value="F:MAP kinase kinase kinase activity"/>
    <property type="evidence" value="ECO:0000315"/>
    <property type="project" value="FlyBase"/>
</dbReference>
<dbReference type="GO" id="GO:0046872">
    <property type="term" value="F:metal ion binding"/>
    <property type="evidence" value="ECO:0007669"/>
    <property type="project" value="UniProtKB-KW"/>
</dbReference>
<dbReference type="GO" id="GO:0106310">
    <property type="term" value="F:protein serine kinase activity"/>
    <property type="evidence" value="ECO:0007669"/>
    <property type="project" value="RHEA"/>
</dbReference>
<dbReference type="GO" id="GO:0004674">
    <property type="term" value="F:protein serine/threonine kinase activity"/>
    <property type="evidence" value="ECO:0000314"/>
    <property type="project" value="FlyBase"/>
</dbReference>
<dbReference type="GO" id="GO:0031625">
    <property type="term" value="F:ubiquitin protein ligase binding"/>
    <property type="evidence" value="ECO:0000353"/>
    <property type="project" value="FlyBase"/>
</dbReference>
<dbReference type="GO" id="GO:0006915">
    <property type="term" value="P:apoptotic process"/>
    <property type="evidence" value="ECO:0000316"/>
    <property type="project" value="FlyBase"/>
</dbReference>
<dbReference type="GO" id="GO:0071222">
    <property type="term" value="P:cellular response to lipopolysaccharide"/>
    <property type="evidence" value="ECO:0000315"/>
    <property type="project" value="FlyBase"/>
</dbReference>
<dbReference type="GO" id="GO:0048749">
    <property type="term" value="P:compound eye development"/>
    <property type="evidence" value="ECO:0000315"/>
    <property type="project" value="FlyBase"/>
</dbReference>
<dbReference type="GO" id="GO:0050829">
    <property type="term" value="P:defense response to Gram-negative bacterium"/>
    <property type="evidence" value="ECO:0000315"/>
    <property type="project" value="FlyBase"/>
</dbReference>
<dbReference type="GO" id="GO:0051607">
    <property type="term" value="P:defense response to virus"/>
    <property type="evidence" value="ECO:0000315"/>
    <property type="project" value="FlyBase"/>
</dbReference>
<dbReference type="GO" id="GO:0007391">
    <property type="term" value="P:dorsal closure"/>
    <property type="evidence" value="ECO:0000315"/>
    <property type="project" value="FlyBase"/>
</dbReference>
<dbReference type="GO" id="GO:0006955">
    <property type="term" value="P:immune response"/>
    <property type="evidence" value="ECO:0000315"/>
    <property type="project" value="UniProtKB"/>
</dbReference>
<dbReference type="GO" id="GO:0045087">
    <property type="term" value="P:innate immune response"/>
    <property type="evidence" value="ECO:0007669"/>
    <property type="project" value="UniProtKB-KW"/>
</dbReference>
<dbReference type="GO" id="GO:0007254">
    <property type="term" value="P:JNK cascade"/>
    <property type="evidence" value="ECO:0000315"/>
    <property type="project" value="FlyBase"/>
</dbReference>
<dbReference type="GO" id="GO:0048802">
    <property type="term" value="P:notum morphogenesis"/>
    <property type="evidence" value="ECO:0000315"/>
    <property type="project" value="FlyBase"/>
</dbReference>
<dbReference type="GO" id="GO:0016318">
    <property type="term" value="P:ommatidial rotation"/>
    <property type="evidence" value="ECO:0000315"/>
    <property type="project" value="FlyBase"/>
</dbReference>
<dbReference type="GO" id="GO:0061057">
    <property type="term" value="P:peptidoglycan recognition protein signaling pathway"/>
    <property type="evidence" value="ECO:0000315"/>
    <property type="project" value="FlyBase"/>
</dbReference>
<dbReference type="GO" id="GO:0006963">
    <property type="term" value="P:positive regulation of antibacterial peptide biosynthetic process"/>
    <property type="evidence" value="ECO:0000304"/>
    <property type="project" value="FlyBase"/>
</dbReference>
<dbReference type="GO" id="GO:0043123">
    <property type="term" value="P:positive regulation of canonical NF-kappaB signal transduction"/>
    <property type="evidence" value="ECO:0000318"/>
    <property type="project" value="GO_Central"/>
</dbReference>
<dbReference type="GO" id="GO:0010628">
    <property type="term" value="P:positive regulation of gene expression"/>
    <property type="evidence" value="ECO:0000315"/>
    <property type="project" value="UniProtKB"/>
</dbReference>
<dbReference type="GO" id="GO:0046330">
    <property type="term" value="P:positive regulation of JNK cascade"/>
    <property type="evidence" value="ECO:0000315"/>
    <property type="project" value="FlyBase"/>
</dbReference>
<dbReference type="GO" id="GO:1901224">
    <property type="term" value="P:positive regulation of non-canonical NF-kappaB signal transduction"/>
    <property type="evidence" value="ECO:0000315"/>
    <property type="project" value="UniProtKB"/>
</dbReference>
<dbReference type="GO" id="GO:0043068">
    <property type="term" value="P:positive regulation of programmed cell death"/>
    <property type="evidence" value="ECO:0000315"/>
    <property type="project" value="FlyBase"/>
</dbReference>
<dbReference type="GO" id="GO:0010506">
    <property type="term" value="P:regulation of autophagy"/>
    <property type="evidence" value="ECO:0000315"/>
    <property type="project" value="FlyBase"/>
</dbReference>
<dbReference type="GO" id="GO:0090175">
    <property type="term" value="P:regulation of establishment of planar polarity"/>
    <property type="evidence" value="ECO:0000316"/>
    <property type="project" value="FlyBase"/>
</dbReference>
<dbReference type="GO" id="GO:0033209">
    <property type="term" value="P:tumor necrosis factor-mediated signaling pathway"/>
    <property type="evidence" value="ECO:0000315"/>
    <property type="project" value="FlyBase"/>
</dbReference>
<dbReference type="CDD" id="cd14058">
    <property type="entry name" value="STKc_TAK1"/>
    <property type="match status" value="1"/>
</dbReference>
<dbReference type="FunFam" id="1.10.510.10:FF:000143">
    <property type="entry name" value="Mitogen-activated protein kinase kinase kinase 7"/>
    <property type="match status" value="1"/>
</dbReference>
<dbReference type="Gene3D" id="3.30.200.20">
    <property type="entry name" value="Phosphorylase Kinase, domain 1"/>
    <property type="match status" value="1"/>
</dbReference>
<dbReference type="Gene3D" id="1.10.510.10">
    <property type="entry name" value="Transferase(Phosphotransferase) domain 1"/>
    <property type="match status" value="1"/>
</dbReference>
<dbReference type="InterPro" id="IPR011009">
    <property type="entry name" value="Kinase-like_dom_sf"/>
</dbReference>
<dbReference type="InterPro" id="IPR000719">
    <property type="entry name" value="Prot_kinase_dom"/>
</dbReference>
<dbReference type="InterPro" id="IPR017441">
    <property type="entry name" value="Protein_kinase_ATP_BS"/>
</dbReference>
<dbReference type="InterPro" id="IPR001245">
    <property type="entry name" value="Ser-Thr/Tyr_kinase_cat_dom"/>
</dbReference>
<dbReference type="InterPro" id="IPR008271">
    <property type="entry name" value="Ser/Thr_kinase_AS"/>
</dbReference>
<dbReference type="PANTHER" id="PTHR46716">
    <property type="entry name" value="MITOGEN-ACTIVATED PROTEIN KINASE KINASE KINASE 7"/>
    <property type="match status" value="1"/>
</dbReference>
<dbReference type="PANTHER" id="PTHR46716:SF1">
    <property type="entry name" value="MITOGEN-ACTIVATED PROTEIN KINASE KINASE KINASE 7"/>
    <property type="match status" value="1"/>
</dbReference>
<dbReference type="Pfam" id="PF07714">
    <property type="entry name" value="PK_Tyr_Ser-Thr"/>
    <property type="match status" value="1"/>
</dbReference>
<dbReference type="PRINTS" id="PR00109">
    <property type="entry name" value="TYRKINASE"/>
</dbReference>
<dbReference type="SMART" id="SM00220">
    <property type="entry name" value="S_TKc"/>
    <property type="match status" value="1"/>
</dbReference>
<dbReference type="SUPFAM" id="SSF56112">
    <property type="entry name" value="Protein kinase-like (PK-like)"/>
    <property type="match status" value="1"/>
</dbReference>
<dbReference type="PROSITE" id="PS00107">
    <property type="entry name" value="PROTEIN_KINASE_ATP"/>
    <property type="match status" value="1"/>
</dbReference>
<dbReference type="PROSITE" id="PS50011">
    <property type="entry name" value="PROTEIN_KINASE_DOM"/>
    <property type="match status" value="1"/>
</dbReference>
<dbReference type="PROSITE" id="PS00108">
    <property type="entry name" value="PROTEIN_KINASE_ST"/>
    <property type="match status" value="1"/>
</dbReference>
<keyword id="KW-0067">ATP-binding</keyword>
<keyword id="KW-0391">Immunity</keyword>
<keyword id="KW-0399">Innate immunity</keyword>
<keyword id="KW-0418">Kinase</keyword>
<keyword id="KW-0460">Magnesium</keyword>
<keyword id="KW-0479">Metal-binding</keyword>
<keyword id="KW-0547">Nucleotide-binding</keyword>
<keyword id="KW-1185">Reference proteome</keyword>
<keyword id="KW-0723">Serine/threonine-protein kinase</keyword>
<keyword id="KW-0808">Transferase</keyword>
<comment type="function">
    <text evidence="5 6 7">Component of a protein kinase signal transduction cascade. Mediator of TGF-beta signal transduction. Responsible for activation of the JNK MAPK pathway (basket, bsk and hemipterous, hep) in response to LPS. Component of the NF-kappa-B pathway; relish-mediated JNK inhibition involves proteasomal degradation of Tak1; certain targets of Relish that are induced during immune responses may facilitate destruction of Tak1 and switch off the JNK cascade. Participates in diverse roles such as control of cell shape and regulation of apoptosis.</text>
</comment>
<comment type="catalytic activity">
    <reaction>
        <text>L-seryl-[protein] + ATP = O-phospho-L-seryl-[protein] + ADP + H(+)</text>
        <dbReference type="Rhea" id="RHEA:17989"/>
        <dbReference type="Rhea" id="RHEA-COMP:9863"/>
        <dbReference type="Rhea" id="RHEA-COMP:11604"/>
        <dbReference type="ChEBI" id="CHEBI:15378"/>
        <dbReference type="ChEBI" id="CHEBI:29999"/>
        <dbReference type="ChEBI" id="CHEBI:30616"/>
        <dbReference type="ChEBI" id="CHEBI:83421"/>
        <dbReference type="ChEBI" id="CHEBI:456216"/>
        <dbReference type="EC" id="2.7.11.25"/>
    </reaction>
</comment>
<comment type="catalytic activity">
    <reaction>
        <text>L-threonyl-[protein] + ATP = O-phospho-L-threonyl-[protein] + ADP + H(+)</text>
        <dbReference type="Rhea" id="RHEA:46608"/>
        <dbReference type="Rhea" id="RHEA-COMP:11060"/>
        <dbReference type="Rhea" id="RHEA-COMP:11605"/>
        <dbReference type="ChEBI" id="CHEBI:15378"/>
        <dbReference type="ChEBI" id="CHEBI:30013"/>
        <dbReference type="ChEBI" id="CHEBI:30616"/>
        <dbReference type="ChEBI" id="CHEBI:61977"/>
        <dbReference type="ChEBI" id="CHEBI:456216"/>
        <dbReference type="EC" id="2.7.11.25"/>
    </reaction>
</comment>
<comment type="cofactor">
    <cofactor evidence="1">
        <name>Mg(2+)</name>
        <dbReference type="ChEBI" id="CHEBI:18420"/>
    </cofactor>
</comment>
<comment type="similarity">
    <text evidence="8">Belongs to the protein kinase superfamily. STE Ser/Thr protein kinase family. MAP kinase kinase kinase subfamily.</text>
</comment>
<proteinExistence type="evidence at transcript level"/>
<organism>
    <name type="scientific">Drosophila melanogaster</name>
    <name type="common">Fruit fly</name>
    <dbReference type="NCBI Taxonomy" id="7227"/>
    <lineage>
        <taxon>Eukaryota</taxon>
        <taxon>Metazoa</taxon>
        <taxon>Ecdysozoa</taxon>
        <taxon>Arthropoda</taxon>
        <taxon>Hexapoda</taxon>
        <taxon>Insecta</taxon>
        <taxon>Pterygota</taxon>
        <taxon>Neoptera</taxon>
        <taxon>Endopterygota</taxon>
        <taxon>Diptera</taxon>
        <taxon>Brachycera</taxon>
        <taxon>Muscomorpha</taxon>
        <taxon>Ephydroidea</taxon>
        <taxon>Drosophilidae</taxon>
        <taxon>Drosophila</taxon>
        <taxon>Sophophora</taxon>
    </lineage>
</organism>
<gene>
    <name type="primary">Tak1</name>
    <name type="ORF">CG18492</name>
</gene>
<accession>Q9V3Q6</accession>
<evidence type="ECO:0000250" key="1"/>
<evidence type="ECO:0000255" key="2">
    <source>
        <dbReference type="PROSITE-ProRule" id="PRU00159"/>
    </source>
</evidence>
<evidence type="ECO:0000255" key="3">
    <source>
        <dbReference type="PROSITE-ProRule" id="PRU10027"/>
    </source>
</evidence>
<evidence type="ECO:0000256" key="4">
    <source>
        <dbReference type="SAM" id="MobiDB-lite"/>
    </source>
</evidence>
<evidence type="ECO:0000269" key="5">
    <source>
    </source>
</evidence>
<evidence type="ECO:0000269" key="6">
    <source>
    </source>
</evidence>
<evidence type="ECO:0000269" key="7">
    <source>
    </source>
</evidence>
<evidence type="ECO:0000305" key="8"/>
<name>M3K7_DROME</name>